<accession>C4XLY3</accession>
<sequence length="122" mass="13159">MIQVESNLDVADNSGAKRVCCIKVLGGSRRRYATVGDIIVVSVKDALPNSKVKKGAVMKAVVVRTKKEVGRADGSYIKFDSNSAVLLSNQGEPVGTRIFGPVARELRQKNFMKIVSLAPEVL</sequence>
<evidence type="ECO:0000255" key="1">
    <source>
        <dbReference type="HAMAP-Rule" id="MF_01367"/>
    </source>
</evidence>
<evidence type="ECO:0000305" key="2"/>
<reference key="1">
    <citation type="journal article" date="2009" name="Genome Res.">
        <title>Whole genome sequence of Desulfovibrio magneticus strain RS-1 revealed common gene clusters in magnetotactic bacteria.</title>
        <authorList>
            <person name="Nakazawa H."/>
            <person name="Arakaki A."/>
            <person name="Narita-Yamada S."/>
            <person name="Yashiro I."/>
            <person name="Jinno K."/>
            <person name="Aoki N."/>
            <person name="Tsuruyama A."/>
            <person name="Okamura Y."/>
            <person name="Tanikawa S."/>
            <person name="Fujita N."/>
            <person name="Takeyama H."/>
            <person name="Matsunaga T."/>
        </authorList>
    </citation>
    <scope>NUCLEOTIDE SEQUENCE [LARGE SCALE GENOMIC DNA]</scope>
    <source>
        <strain>ATCC 700980 / DSM 13731 / RS-1</strain>
    </source>
</reference>
<organism>
    <name type="scientific">Solidesulfovibrio magneticus (strain ATCC 700980 / DSM 13731 / RS-1)</name>
    <name type="common">Desulfovibrio magneticus</name>
    <dbReference type="NCBI Taxonomy" id="573370"/>
    <lineage>
        <taxon>Bacteria</taxon>
        <taxon>Pseudomonadati</taxon>
        <taxon>Thermodesulfobacteriota</taxon>
        <taxon>Desulfovibrionia</taxon>
        <taxon>Desulfovibrionales</taxon>
        <taxon>Desulfovibrionaceae</taxon>
        <taxon>Solidesulfovibrio</taxon>
    </lineage>
</organism>
<name>RL14_SOLM1</name>
<proteinExistence type="inferred from homology"/>
<dbReference type="EMBL" id="AP010904">
    <property type="protein sequence ID" value="BAH74721.1"/>
    <property type="molecule type" value="Genomic_DNA"/>
</dbReference>
<dbReference type="RefSeq" id="WP_015859938.1">
    <property type="nucleotide sequence ID" value="NC_012796.1"/>
</dbReference>
<dbReference type="SMR" id="C4XLY3"/>
<dbReference type="STRING" id="573370.DMR_12300"/>
<dbReference type="KEGG" id="dma:DMR_12300"/>
<dbReference type="eggNOG" id="COG0093">
    <property type="taxonomic scope" value="Bacteria"/>
</dbReference>
<dbReference type="HOGENOM" id="CLU_095071_2_1_7"/>
<dbReference type="OrthoDB" id="9806379at2"/>
<dbReference type="Proteomes" id="UP000009071">
    <property type="component" value="Chromosome"/>
</dbReference>
<dbReference type="GO" id="GO:0022625">
    <property type="term" value="C:cytosolic large ribosomal subunit"/>
    <property type="evidence" value="ECO:0007669"/>
    <property type="project" value="TreeGrafter"/>
</dbReference>
<dbReference type="GO" id="GO:0070180">
    <property type="term" value="F:large ribosomal subunit rRNA binding"/>
    <property type="evidence" value="ECO:0007669"/>
    <property type="project" value="TreeGrafter"/>
</dbReference>
<dbReference type="GO" id="GO:0003735">
    <property type="term" value="F:structural constituent of ribosome"/>
    <property type="evidence" value="ECO:0007669"/>
    <property type="project" value="InterPro"/>
</dbReference>
<dbReference type="GO" id="GO:0006412">
    <property type="term" value="P:translation"/>
    <property type="evidence" value="ECO:0007669"/>
    <property type="project" value="UniProtKB-UniRule"/>
</dbReference>
<dbReference type="CDD" id="cd00337">
    <property type="entry name" value="Ribosomal_uL14"/>
    <property type="match status" value="1"/>
</dbReference>
<dbReference type="FunFam" id="2.40.150.20:FF:000001">
    <property type="entry name" value="50S ribosomal protein L14"/>
    <property type="match status" value="1"/>
</dbReference>
<dbReference type="Gene3D" id="2.40.150.20">
    <property type="entry name" value="Ribosomal protein L14"/>
    <property type="match status" value="1"/>
</dbReference>
<dbReference type="HAMAP" id="MF_01367">
    <property type="entry name" value="Ribosomal_uL14"/>
    <property type="match status" value="1"/>
</dbReference>
<dbReference type="InterPro" id="IPR000218">
    <property type="entry name" value="Ribosomal_uL14"/>
</dbReference>
<dbReference type="InterPro" id="IPR005745">
    <property type="entry name" value="Ribosomal_uL14_bac-type"/>
</dbReference>
<dbReference type="InterPro" id="IPR019972">
    <property type="entry name" value="Ribosomal_uL14_CS"/>
</dbReference>
<dbReference type="InterPro" id="IPR036853">
    <property type="entry name" value="Ribosomal_uL14_sf"/>
</dbReference>
<dbReference type="NCBIfam" id="TIGR01067">
    <property type="entry name" value="rplN_bact"/>
    <property type="match status" value="1"/>
</dbReference>
<dbReference type="PANTHER" id="PTHR11761">
    <property type="entry name" value="50S/60S RIBOSOMAL PROTEIN L14/L23"/>
    <property type="match status" value="1"/>
</dbReference>
<dbReference type="PANTHER" id="PTHR11761:SF3">
    <property type="entry name" value="LARGE RIBOSOMAL SUBUNIT PROTEIN UL14M"/>
    <property type="match status" value="1"/>
</dbReference>
<dbReference type="Pfam" id="PF00238">
    <property type="entry name" value="Ribosomal_L14"/>
    <property type="match status" value="1"/>
</dbReference>
<dbReference type="SMART" id="SM01374">
    <property type="entry name" value="Ribosomal_L14"/>
    <property type="match status" value="1"/>
</dbReference>
<dbReference type="SUPFAM" id="SSF50193">
    <property type="entry name" value="Ribosomal protein L14"/>
    <property type="match status" value="1"/>
</dbReference>
<dbReference type="PROSITE" id="PS00049">
    <property type="entry name" value="RIBOSOMAL_L14"/>
    <property type="match status" value="1"/>
</dbReference>
<comment type="function">
    <text evidence="1">Binds to 23S rRNA. Forms part of two intersubunit bridges in the 70S ribosome.</text>
</comment>
<comment type="subunit">
    <text evidence="1">Part of the 50S ribosomal subunit. Forms a cluster with proteins L3 and L19. In the 70S ribosome, L14 and L19 interact and together make contacts with the 16S rRNA in bridges B5 and B8.</text>
</comment>
<comment type="similarity">
    <text evidence="1">Belongs to the universal ribosomal protein uL14 family.</text>
</comment>
<protein>
    <recommendedName>
        <fullName evidence="1">Large ribosomal subunit protein uL14</fullName>
    </recommendedName>
    <alternativeName>
        <fullName evidence="2">50S ribosomal protein L14</fullName>
    </alternativeName>
</protein>
<feature type="chain" id="PRO_1000214974" description="Large ribosomal subunit protein uL14">
    <location>
        <begin position="1"/>
        <end position="122"/>
    </location>
</feature>
<gene>
    <name evidence="1" type="primary">rplN</name>
    <name type="ordered locus">DMR_12300</name>
</gene>
<keyword id="KW-0687">Ribonucleoprotein</keyword>
<keyword id="KW-0689">Ribosomal protein</keyword>
<keyword id="KW-0694">RNA-binding</keyword>
<keyword id="KW-0699">rRNA-binding</keyword>